<dbReference type="EC" id="6.3.2.1" evidence="1"/>
<dbReference type="EMBL" id="CP000771">
    <property type="protein sequence ID" value="ABS61414.1"/>
    <property type="molecule type" value="Genomic_DNA"/>
</dbReference>
<dbReference type="RefSeq" id="WP_011994718.1">
    <property type="nucleotide sequence ID" value="NC_009718.1"/>
</dbReference>
<dbReference type="SMR" id="A7HND1"/>
<dbReference type="STRING" id="381764.Fnod_1571"/>
<dbReference type="KEGG" id="fno:Fnod_1571"/>
<dbReference type="eggNOG" id="COG0414">
    <property type="taxonomic scope" value="Bacteria"/>
</dbReference>
<dbReference type="HOGENOM" id="CLU_047148_0_0_0"/>
<dbReference type="OrthoDB" id="9773087at2"/>
<dbReference type="UniPathway" id="UPA00028">
    <property type="reaction ID" value="UER00005"/>
</dbReference>
<dbReference type="Proteomes" id="UP000002415">
    <property type="component" value="Chromosome"/>
</dbReference>
<dbReference type="GO" id="GO:0005829">
    <property type="term" value="C:cytosol"/>
    <property type="evidence" value="ECO:0007669"/>
    <property type="project" value="TreeGrafter"/>
</dbReference>
<dbReference type="GO" id="GO:0005524">
    <property type="term" value="F:ATP binding"/>
    <property type="evidence" value="ECO:0007669"/>
    <property type="project" value="UniProtKB-KW"/>
</dbReference>
<dbReference type="GO" id="GO:0004592">
    <property type="term" value="F:pantoate-beta-alanine ligase activity"/>
    <property type="evidence" value="ECO:0007669"/>
    <property type="project" value="UniProtKB-UniRule"/>
</dbReference>
<dbReference type="GO" id="GO:0015940">
    <property type="term" value="P:pantothenate biosynthetic process"/>
    <property type="evidence" value="ECO:0007669"/>
    <property type="project" value="UniProtKB-UniRule"/>
</dbReference>
<dbReference type="CDD" id="cd00560">
    <property type="entry name" value="PanC"/>
    <property type="match status" value="1"/>
</dbReference>
<dbReference type="FunFam" id="3.30.1300.10:FF:000001">
    <property type="entry name" value="Pantothenate synthetase"/>
    <property type="match status" value="1"/>
</dbReference>
<dbReference type="FunFam" id="3.40.50.620:FF:000013">
    <property type="entry name" value="Pantothenate synthetase"/>
    <property type="match status" value="1"/>
</dbReference>
<dbReference type="Gene3D" id="3.40.50.620">
    <property type="entry name" value="HUPs"/>
    <property type="match status" value="1"/>
</dbReference>
<dbReference type="Gene3D" id="3.30.1300.10">
    <property type="entry name" value="Pantoate-beta-alanine ligase, C-terminal domain"/>
    <property type="match status" value="1"/>
</dbReference>
<dbReference type="HAMAP" id="MF_00158">
    <property type="entry name" value="PanC"/>
    <property type="match status" value="1"/>
</dbReference>
<dbReference type="InterPro" id="IPR004821">
    <property type="entry name" value="Cyt_trans-like"/>
</dbReference>
<dbReference type="InterPro" id="IPR003721">
    <property type="entry name" value="Pantoate_ligase"/>
</dbReference>
<dbReference type="InterPro" id="IPR042176">
    <property type="entry name" value="Pantoate_ligase_C"/>
</dbReference>
<dbReference type="InterPro" id="IPR014729">
    <property type="entry name" value="Rossmann-like_a/b/a_fold"/>
</dbReference>
<dbReference type="NCBIfam" id="TIGR00125">
    <property type="entry name" value="cyt_tran_rel"/>
    <property type="match status" value="1"/>
</dbReference>
<dbReference type="NCBIfam" id="TIGR00018">
    <property type="entry name" value="panC"/>
    <property type="match status" value="1"/>
</dbReference>
<dbReference type="PANTHER" id="PTHR21299">
    <property type="entry name" value="CYTIDYLATE KINASE/PANTOATE-BETA-ALANINE LIGASE"/>
    <property type="match status" value="1"/>
</dbReference>
<dbReference type="PANTHER" id="PTHR21299:SF1">
    <property type="entry name" value="PANTOATE--BETA-ALANINE LIGASE"/>
    <property type="match status" value="1"/>
</dbReference>
<dbReference type="Pfam" id="PF02569">
    <property type="entry name" value="Pantoate_ligase"/>
    <property type="match status" value="1"/>
</dbReference>
<dbReference type="SUPFAM" id="SSF52374">
    <property type="entry name" value="Nucleotidylyl transferase"/>
    <property type="match status" value="1"/>
</dbReference>
<name>PANC_FERNB</name>
<evidence type="ECO:0000255" key="1">
    <source>
        <dbReference type="HAMAP-Rule" id="MF_00158"/>
    </source>
</evidence>
<keyword id="KW-0067">ATP-binding</keyword>
<keyword id="KW-0963">Cytoplasm</keyword>
<keyword id="KW-0436">Ligase</keyword>
<keyword id="KW-0547">Nucleotide-binding</keyword>
<keyword id="KW-0566">Pantothenate biosynthesis</keyword>
<keyword id="KW-1185">Reference proteome</keyword>
<sequence length="280" mass="32397">MRLVQTINEMKRLSKEAINKGKTIGFVPTMGYLHEGHLSLVKKAREDNDIVVVSIFVNPTQFGPNEDFNRYPRDLERDLRLLEPLNVDYVFYPSVEEMYPKNYSVYVDEVELSKYLCGAKRPGHFRGVCTVVTKLFNIVKPTRAYFGQKDAQQFRILRRMVQNLNMDVEMIEMPIVRESDGLAMSSRNVYLNEEERKEATRLHKSLLKAKELIESGERDVSKIKNSMLEILNHPLLKIDYVEIVDEETLKPIEKIEGKVIIALAVFVGKARLIDNMIINC</sequence>
<gene>
    <name evidence="1" type="primary">panC</name>
    <name type="ordered locus">Fnod_1571</name>
</gene>
<reference key="1">
    <citation type="submission" date="2007-07" db="EMBL/GenBank/DDBJ databases">
        <title>Complete sequence of Fervidobacterium nodosum Rt17-B1.</title>
        <authorList>
            <consortium name="US DOE Joint Genome Institute"/>
            <person name="Copeland A."/>
            <person name="Lucas S."/>
            <person name="Lapidus A."/>
            <person name="Barry K."/>
            <person name="Glavina del Rio T."/>
            <person name="Dalin E."/>
            <person name="Tice H."/>
            <person name="Pitluck S."/>
            <person name="Saunders E."/>
            <person name="Brettin T."/>
            <person name="Bruce D."/>
            <person name="Detter J.C."/>
            <person name="Han C."/>
            <person name="Schmutz J."/>
            <person name="Larimer F."/>
            <person name="Land M."/>
            <person name="Hauser L."/>
            <person name="Kyrpides N."/>
            <person name="Mikhailova N."/>
            <person name="Nelson K."/>
            <person name="Gogarten J.P."/>
            <person name="Noll K."/>
            <person name="Richardson P."/>
        </authorList>
    </citation>
    <scope>NUCLEOTIDE SEQUENCE [LARGE SCALE GENOMIC DNA]</scope>
    <source>
        <strain>ATCC 35602 / DSM 5306 / Rt17-B1</strain>
    </source>
</reference>
<organism>
    <name type="scientific">Fervidobacterium nodosum (strain ATCC 35602 / DSM 5306 / Rt17-B1)</name>
    <dbReference type="NCBI Taxonomy" id="381764"/>
    <lineage>
        <taxon>Bacteria</taxon>
        <taxon>Thermotogati</taxon>
        <taxon>Thermotogota</taxon>
        <taxon>Thermotogae</taxon>
        <taxon>Thermotogales</taxon>
        <taxon>Fervidobacteriaceae</taxon>
        <taxon>Fervidobacterium</taxon>
    </lineage>
</organism>
<accession>A7HND1</accession>
<proteinExistence type="inferred from homology"/>
<comment type="function">
    <text evidence="1">Catalyzes the condensation of pantoate with beta-alanine in an ATP-dependent reaction via a pantoyl-adenylate intermediate.</text>
</comment>
<comment type="catalytic activity">
    <reaction evidence="1">
        <text>(R)-pantoate + beta-alanine + ATP = (R)-pantothenate + AMP + diphosphate + H(+)</text>
        <dbReference type="Rhea" id="RHEA:10912"/>
        <dbReference type="ChEBI" id="CHEBI:15378"/>
        <dbReference type="ChEBI" id="CHEBI:15980"/>
        <dbReference type="ChEBI" id="CHEBI:29032"/>
        <dbReference type="ChEBI" id="CHEBI:30616"/>
        <dbReference type="ChEBI" id="CHEBI:33019"/>
        <dbReference type="ChEBI" id="CHEBI:57966"/>
        <dbReference type="ChEBI" id="CHEBI:456215"/>
        <dbReference type="EC" id="6.3.2.1"/>
    </reaction>
</comment>
<comment type="pathway">
    <text evidence="1">Cofactor biosynthesis; (R)-pantothenate biosynthesis; (R)-pantothenate from (R)-pantoate and beta-alanine: step 1/1.</text>
</comment>
<comment type="subunit">
    <text evidence="1">Homodimer.</text>
</comment>
<comment type="subcellular location">
    <subcellularLocation>
        <location evidence="1">Cytoplasm</location>
    </subcellularLocation>
</comment>
<comment type="miscellaneous">
    <text evidence="1">The reaction proceeds by a bi uni uni bi ping pong mechanism.</text>
</comment>
<comment type="similarity">
    <text evidence="1">Belongs to the pantothenate synthetase family.</text>
</comment>
<feature type="chain" id="PRO_1000076855" description="Pantothenate synthetase">
    <location>
        <begin position="1"/>
        <end position="280"/>
    </location>
</feature>
<feature type="active site" description="Proton donor" evidence="1">
    <location>
        <position position="37"/>
    </location>
</feature>
<feature type="binding site" evidence="1">
    <location>
        <begin position="30"/>
        <end position="37"/>
    </location>
    <ligand>
        <name>ATP</name>
        <dbReference type="ChEBI" id="CHEBI:30616"/>
    </ligand>
</feature>
<feature type="binding site" evidence="1">
    <location>
        <position position="61"/>
    </location>
    <ligand>
        <name>(R)-pantoate</name>
        <dbReference type="ChEBI" id="CHEBI:15980"/>
    </ligand>
</feature>
<feature type="binding site" evidence="1">
    <location>
        <position position="61"/>
    </location>
    <ligand>
        <name>beta-alanine</name>
        <dbReference type="ChEBI" id="CHEBI:57966"/>
    </ligand>
</feature>
<feature type="binding site" evidence="1">
    <location>
        <begin position="147"/>
        <end position="150"/>
    </location>
    <ligand>
        <name>ATP</name>
        <dbReference type="ChEBI" id="CHEBI:30616"/>
    </ligand>
</feature>
<feature type="binding site" evidence="1">
    <location>
        <position position="153"/>
    </location>
    <ligand>
        <name>(R)-pantoate</name>
        <dbReference type="ChEBI" id="CHEBI:15980"/>
    </ligand>
</feature>
<feature type="binding site" evidence="1">
    <location>
        <position position="176"/>
    </location>
    <ligand>
        <name>ATP</name>
        <dbReference type="ChEBI" id="CHEBI:30616"/>
    </ligand>
</feature>
<feature type="binding site" evidence="1">
    <location>
        <begin position="184"/>
        <end position="187"/>
    </location>
    <ligand>
        <name>ATP</name>
        <dbReference type="ChEBI" id="CHEBI:30616"/>
    </ligand>
</feature>
<protein>
    <recommendedName>
        <fullName evidence="1">Pantothenate synthetase</fullName>
        <shortName evidence="1">PS</shortName>
        <ecNumber evidence="1">6.3.2.1</ecNumber>
    </recommendedName>
    <alternativeName>
        <fullName evidence="1">Pantoate--beta-alanine ligase</fullName>
    </alternativeName>
    <alternativeName>
        <fullName evidence="1">Pantoate-activating enzyme</fullName>
    </alternativeName>
</protein>